<name>HEMA_I77AG</name>
<organism>
    <name type="scientific">Influenza A virus (strain A/Budgerigar/Hokkaido/1/1977 H4N6)</name>
    <dbReference type="NCBI Taxonomy" id="385587"/>
    <lineage>
        <taxon>Viruses</taxon>
        <taxon>Riboviria</taxon>
        <taxon>Orthornavirae</taxon>
        <taxon>Negarnaviricota</taxon>
        <taxon>Polyploviricotina</taxon>
        <taxon>Insthoviricetes</taxon>
        <taxon>Articulavirales</taxon>
        <taxon>Orthomyxoviridae</taxon>
        <taxon>Alphainfluenzavirus</taxon>
        <taxon>Alphainfluenzavirus influenzae</taxon>
        <taxon>Influenza A virus</taxon>
    </lineage>
</organism>
<evidence type="ECO:0000255" key="1">
    <source>
        <dbReference type="HAMAP-Rule" id="MF_04072"/>
    </source>
</evidence>
<evidence type="ECO:0000305" key="2"/>
<dbReference type="EMBL" id="M25285">
    <property type="protein sequence ID" value="AAA43218.1"/>
    <property type="molecule type" value="Genomic_RNA"/>
</dbReference>
<dbReference type="SMR" id="P19694"/>
<dbReference type="GlyCosmos" id="P19694">
    <property type="glycosylation" value="5 sites, No reported glycans"/>
</dbReference>
<dbReference type="GO" id="GO:0020002">
    <property type="term" value="C:host cell plasma membrane"/>
    <property type="evidence" value="ECO:0007669"/>
    <property type="project" value="UniProtKB-SubCell"/>
</dbReference>
<dbReference type="GO" id="GO:0016020">
    <property type="term" value="C:membrane"/>
    <property type="evidence" value="ECO:0007669"/>
    <property type="project" value="UniProtKB-UniRule"/>
</dbReference>
<dbReference type="GO" id="GO:0019031">
    <property type="term" value="C:viral envelope"/>
    <property type="evidence" value="ECO:0007669"/>
    <property type="project" value="UniProtKB-UniRule"/>
</dbReference>
<dbReference type="GO" id="GO:0055036">
    <property type="term" value="C:virion membrane"/>
    <property type="evidence" value="ECO:0007669"/>
    <property type="project" value="UniProtKB-SubCell"/>
</dbReference>
<dbReference type="GO" id="GO:0046789">
    <property type="term" value="F:host cell surface receptor binding"/>
    <property type="evidence" value="ECO:0007669"/>
    <property type="project" value="UniProtKB-UniRule"/>
</dbReference>
<dbReference type="GO" id="GO:0075512">
    <property type="term" value="P:clathrin-dependent endocytosis of virus by host cell"/>
    <property type="evidence" value="ECO:0007669"/>
    <property type="project" value="UniProtKB-UniRule"/>
</dbReference>
<dbReference type="GO" id="GO:0039654">
    <property type="term" value="P:fusion of virus membrane with host endosome membrane"/>
    <property type="evidence" value="ECO:0007669"/>
    <property type="project" value="UniProtKB-UniRule"/>
</dbReference>
<dbReference type="GO" id="GO:0019064">
    <property type="term" value="P:fusion of virus membrane with host plasma membrane"/>
    <property type="evidence" value="ECO:0007669"/>
    <property type="project" value="InterPro"/>
</dbReference>
<dbReference type="GO" id="GO:0046761">
    <property type="term" value="P:viral budding from plasma membrane"/>
    <property type="evidence" value="ECO:0007669"/>
    <property type="project" value="UniProtKB-UniRule"/>
</dbReference>
<dbReference type="GO" id="GO:0019062">
    <property type="term" value="P:virion attachment to host cell"/>
    <property type="evidence" value="ECO:0007669"/>
    <property type="project" value="UniProtKB-KW"/>
</dbReference>
<dbReference type="Gene3D" id="3.90.20.10">
    <property type="match status" value="1"/>
</dbReference>
<dbReference type="Gene3D" id="3.90.209.20">
    <property type="match status" value="1"/>
</dbReference>
<dbReference type="HAMAP" id="MF_04072">
    <property type="entry name" value="INFV_HEMA"/>
    <property type="match status" value="1"/>
</dbReference>
<dbReference type="InterPro" id="IPR008980">
    <property type="entry name" value="Capsid_hemagglutn"/>
</dbReference>
<dbReference type="InterPro" id="IPR013828">
    <property type="entry name" value="Hemagglutn_HA1_a/b_dom_sf"/>
</dbReference>
<dbReference type="InterPro" id="IPR000149">
    <property type="entry name" value="Hemagglutn_influenz_A"/>
</dbReference>
<dbReference type="InterPro" id="IPR001364">
    <property type="entry name" value="Hemagglutn_influenz_A/B"/>
</dbReference>
<dbReference type="Pfam" id="PF00509">
    <property type="entry name" value="Hemagglutinin"/>
    <property type="match status" value="1"/>
</dbReference>
<dbReference type="PRINTS" id="PR00330">
    <property type="entry name" value="HEMAGGLUTN1"/>
</dbReference>
<dbReference type="PRINTS" id="PR00329">
    <property type="entry name" value="HEMAGGLUTN12"/>
</dbReference>
<dbReference type="SUPFAM" id="SSF58064">
    <property type="entry name" value="Influenza hemagglutinin (stalk)"/>
    <property type="match status" value="1"/>
</dbReference>
<dbReference type="SUPFAM" id="SSF49818">
    <property type="entry name" value="Viral protein domain"/>
    <property type="match status" value="1"/>
</dbReference>
<comment type="function">
    <text>Binds to sialic acid-containing receptors on the cell surface, bringing about the attachment of the virus particle to the cell. This attachment induces virion internalization of about two third of the virus particles through clathrin-dependent endocytosis and about one third through a clathrin- and caveolin-independent pathway. Plays a major role in the determination of host range restriction and virulence. Class I viral fusion protein. Responsible for penetration of the virus into the cell cytoplasm by mediating the fusion of the membrane of the endocytosed virus particle with the endosomal membrane. Low pH in endosomes induces an irreversible conformational change in HA2, releasing the fusion hydrophobic peptide. Several trimers are required to form a competent fusion pore.</text>
</comment>
<comment type="function">
    <text evidence="1">Binds to sialic acid-containing receptors on the cell surface, bringing about the attachment of the virus particle to the cell. This attachment induces virion internalization either through clathrin-dependent endocytosis or through clathrin- and caveolin-independent pathway. Plays a major role in the determination of host range restriction and virulence. Class I viral fusion protein. Responsible for penetration of the virus into the cell cytoplasm by mediating the fusion of the membrane of the endocytosed virus particle with the endosomal membrane. Low pH in endosomes induces an irreversible conformational change in HA2, releasing the fusion hydrophobic peptide. Several trimers are required to form a competent fusion pore.</text>
</comment>
<comment type="subunit">
    <text evidence="1">Homotrimer of disulfide-linked HA1-HA2.</text>
</comment>
<comment type="subcellular location">
    <subcellularLocation>
        <location evidence="1">Virion membrane</location>
        <topology evidence="1">Single-pass type I membrane protein</topology>
    </subcellularLocation>
    <subcellularLocation>
        <location evidence="1">Host apical cell membrane</location>
        <topology evidence="1">Single-pass type I membrane protein</topology>
    </subcellularLocation>
    <text evidence="1">Targeted to the apical plasma membrane in epithelial polarized cells through a signal present in the transmembrane domain. Associated with glycosphingolipid- and cholesterol-enriched detergent-resistant lipid rafts.</text>
</comment>
<comment type="PTM">
    <text evidence="1">Palmitoylated.</text>
</comment>
<comment type="PTM">
    <text evidence="1">In natural infection, inactive HA is matured into HA1 and HA2 outside the cell by one or more trypsin-like, arginine-specific endoprotease secreted by the bronchial epithelial cells. One identified protease that may be involved in this process is secreted in lungs by club cells.</text>
</comment>
<comment type="miscellaneous">
    <text>Major glycoprotein, comprises over 80% of the envelope proteins present in virus particle.</text>
</comment>
<comment type="miscellaneous">
    <text>The extent of infection into host organism is determined by HA. Influenza viruses bud from the apical surface of polarized epithelial cells (e.g. bronchial epithelial cells) into lumen of lungs and are therefore usually pneumotropic. The reason is that HA is cleaved by tryptase clara which is restricted to lungs. However, HAs of H5 and H7 pantropic avian viruses subtypes can be cleaved by furin and subtilisin-type enzymes, allowing the virus to grow in other organs than lungs.</text>
</comment>
<comment type="miscellaneous">
    <text evidence="2">The influenza A genome consist of 8 RNA segments. Genetic variation of hemagglutinin and/or neuraminidase genes results in the emergence of new influenza strains. The mechanism of variation can be the result of point mutations or the result of genetic reassortment between segments of two different strains.</text>
</comment>
<comment type="similarity">
    <text evidence="1">Belongs to the influenza viruses hemagglutinin family.</text>
</comment>
<reference key="1">
    <citation type="journal article" date="1989" name="Virology">
        <title>Distinct lineages of influenza virus H4 hemagglutinin genes in different regions of the world.</title>
        <authorList>
            <person name="Donis R.O."/>
            <person name="Bean W.J."/>
            <person name="Kawaoka Y."/>
            <person name="Webster R.G."/>
        </authorList>
    </citation>
    <scope>NUCLEOTIDE SEQUENCE [GENOMIC RNA]</scope>
</reference>
<organismHost>
    <name type="scientific">Aves</name>
    <dbReference type="NCBI Taxonomy" id="8782"/>
</organismHost>
<organismHost>
    <name type="scientific">Sus scrofa</name>
    <name type="common">Pig</name>
    <dbReference type="NCBI Taxonomy" id="9823"/>
</organismHost>
<accession>P19694</accession>
<protein>
    <recommendedName>
        <fullName evidence="1">Hemagglutinin</fullName>
    </recommendedName>
    <component>
        <recommendedName>
            <fullName evidence="1">Hemagglutinin HA1 chain</fullName>
        </recommendedName>
    </component>
    <component>
        <recommendedName>
            <fullName evidence="1">Hemagglutinin HA2 chain</fullName>
        </recommendedName>
    </component>
</protein>
<sequence>MLSVVILFLLVAENSSQSYTGNPVICMGHHSVANGTMVKTLTDDQVEVVTARELVESQTLPELCPSPLRLVDGQTCDIINGALGSPGCDHLNGAEWDVFIERPNAVDTCYPFDVPDYQSLRSILANNGKFEFIAEEFQWNTVIQNGKSSACKRANVNDFFNRLNWLVKSTGNAYPLQNLTKVNNGDYARLYIWGVHHPSTDTEQTNLYKNNPGRVTVSTKTSQTSVVPNIGSRPLVRGQSGRISFYWTIVEPGDLIVFNTIGNLIAPRGHYKLNNQKKSTILNTPIPIGSCVSKCHTDKGSVSTTNPFQNISRIAIGECPKYVKQGSLKLATGMRNVPEKASRGLFGAIAGFIENGWQGLIDGWYGFRHQNAEGTGTAADLKSTQAAIDKINGKLNRLIEKTNEKYHQIEKEFNKIEGRVQDLEKYVEDTKIDLWSYNAELLVALENQHTIDVTDSEMNKLFERVRRQLRENAEDQGNGCFEIFHKCDNNCIESIRNGTYDHDIYRDEAINNRFQIQGVKLIQGYKDIILWISFSISCFLLVALLLAFILWACQNGNIRCQICI</sequence>
<keyword id="KW-1167">Clathrin- and caveolin-independent endocytosis of virus by host</keyword>
<keyword id="KW-1165">Clathrin-mediated endocytosis of virus by host</keyword>
<keyword id="KW-1015">Disulfide bond</keyword>
<keyword id="KW-1170">Fusion of virus membrane with host endosomal membrane</keyword>
<keyword id="KW-1168">Fusion of virus membrane with host membrane</keyword>
<keyword id="KW-0325">Glycoprotein</keyword>
<keyword id="KW-0348">Hemagglutinin</keyword>
<keyword id="KW-1032">Host cell membrane</keyword>
<keyword id="KW-1043">Host membrane</keyword>
<keyword id="KW-0945">Host-virus interaction</keyword>
<keyword id="KW-0449">Lipoprotein</keyword>
<keyword id="KW-0472">Membrane</keyword>
<keyword id="KW-0564">Palmitate</keyword>
<keyword id="KW-0732">Signal</keyword>
<keyword id="KW-0812">Transmembrane</keyword>
<keyword id="KW-1133">Transmembrane helix</keyword>
<keyword id="KW-1161">Viral attachment to host cell</keyword>
<keyword id="KW-0261">Viral envelope protein</keyword>
<keyword id="KW-1162">Viral penetration into host cytoplasm</keyword>
<keyword id="KW-0946">Virion</keyword>
<keyword id="KW-1164">Virus endocytosis by host</keyword>
<keyword id="KW-1160">Virus entry into host cell</keyword>
<feature type="signal peptide" evidence="1">
    <location>
        <begin position="1"/>
        <end position="16"/>
    </location>
</feature>
<feature type="chain" id="PRO_0000440470" description="Hemagglutinin" evidence="1">
    <location>
        <begin position="17"/>
        <end position="564"/>
    </location>
</feature>
<feature type="chain" id="PRO_0000038889" description="Hemagglutinin HA1 chain">
    <location>
        <begin position="17"/>
        <end position="342"/>
    </location>
</feature>
<feature type="chain" id="PRO_0000038890" description="Hemagglutinin HA2 chain" evidence="1">
    <location>
        <begin position="344"/>
        <end position="564"/>
    </location>
</feature>
<feature type="topological domain" description="Extracellular" evidence="1">
    <location>
        <begin position="17"/>
        <end position="527"/>
    </location>
</feature>
<feature type="transmembrane region" description="Helical" evidence="1">
    <location>
        <begin position="528"/>
        <end position="548"/>
    </location>
</feature>
<feature type="topological domain" description="Cytoplasmic" evidence="1">
    <location>
        <begin position="549"/>
        <end position="564"/>
    </location>
</feature>
<feature type="site" description="Cleavage; by host" evidence="1">
    <location>
        <begin position="343"/>
        <end position="344"/>
    </location>
</feature>
<feature type="lipid moiety-binding region" description="S-palmitoyl cysteine; by host" evidence="1">
    <location>
        <position position="553"/>
    </location>
</feature>
<feature type="lipid moiety-binding region" description="S-palmitoyl cysteine; by host" evidence="1">
    <location>
        <position position="560"/>
    </location>
</feature>
<feature type="lipid moiety-binding region" description="S-palmitoyl cysteine; by host" evidence="1">
    <location>
        <position position="563"/>
    </location>
</feature>
<feature type="glycosylation site" description="N-linked (GlcNAc...) asparagine; by host" evidence="1">
    <location>
        <position position="14"/>
    </location>
</feature>
<feature type="glycosylation site" description="N-linked (GlcNAc...) asparagine; by host" evidence="1">
    <location>
        <position position="34"/>
    </location>
</feature>
<feature type="glycosylation site" description="N-linked (GlcNAc...) asparagine; by host" evidence="1">
    <location>
        <position position="178"/>
    </location>
</feature>
<feature type="glycosylation site" description="N-linked (GlcNAc...) asparagine; by host" evidence="1">
    <location>
        <position position="310"/>
    </location>
</feature>
<feature type="glycosylation site" description="N-linked (GlcNAc...) asparagine; by host" evidence="1">
    <location>
        <position position="497"/>
    </location>
</feature>
<feature type="disulfide bond" description="Interchain (between HA1 and HA2 chains)" evidence="1">
    <location>
        <begin position="26"/>
        <end position="480"/>
    </location>
</feature>
<feature type="disulfide bond" evidence="1">
    <location>
        <begin position="64"/>
        <end position="291"/>
    </location>
</feature>
<feature type="disulfide bond" evidence="1">
    <location>
        <begin position="76"/>
        <end position="88"/>
    </location>
</feature>
<feature type="disulfide bond" evidence="1">
    <location>
        <begin position="109"/>
        <end position="151"/>
    </location>
</feature>
<feature type="disulfide bond" evidence="1">
    <location>
        <begin position="295"/>
        <end position="319"/>
    </location>
</feature>
<feature type="disulfide bond" evidence="1">
    <location>
        <begin position="487"/>
        <end position="491"/>
    </location>
</feature>
<proteinExistence type="inferred from homology"/>
<gene>
    <name evidence="1" type="primary">HA</name>
</gene>